<name>PURNU_BACTN</name>
<protein>
    <recommendedName>
        <fullName>Purine nucleoside phosphorylase BT_4389</fullName>
        <ecNumber evidence="2">2.4.2.1</ecNumber>
    </recommendedName>
    <alternativeName>
        <fullName>Adenosine deaminase BT_4389</fullName>
        <ecNumber evidence="2">3.5.4.4</ecNumber>
    </alternativeName>
    <alternativeName>
        <fullName>S-methyl-5'-thioadenosine phosphorylase BT_4389</fullName>
        <ecNumber evidence="2">2.4.2.28</ecNumber>
    </alternativeName>
</protein>
<gene>
    <name evidence="5" type="ordered locus">BT_4389</name>
</gene>
<keyword id="KW-0186">Copper</keyword>
<keyword id="KW-0378">Hydrolase</keyword>
<keyword id="KW-0479">Metal-binding</keyword>
<keyword id="KW-0560">Oxidoreductase</keyword>
<keyword id="KW-1185">Reference proteome</keyword>
<keyword id="KW-0808">Transferase</keyword>
<keyword id="KW-0862">Zinc</keyword>
<feature type="chain" id="PRO_0000440779" description="Purine nucleoside phosphorylase BT_4389">
    <location>
        <begin position="1"/>
        <end position="270"/>
    </location>
</feature>
<feature type="binding site" evidence="2">
    <location>
        <position position="79"/>
    </location>
    <ligand>
        <name>Zn(2+)</name>
        <dbReference type="ChEBI" id="CHEBI:29105"/>
        <note>catalytic</note>
    </ligand>
</feature>
<feature type="binding site" evidence="2">
    <location>
        <position position="124"/>
    </location>
    <ligand>
        <name>Zn(2+)</name>
        <dbReference type="ChEBI" id="CHEBI:29105"/>
        <note>catalytic</note>
    </ligand>
</feature>
<feature type="binding site" evidence="2">
    <location>
        <position position="141"/>
    </location>
    <ligand>
        <name>Zn(2+)</name>
        <dbReference type="ChEBI" id="CHEBI:29105"/>
        <note>catalytic</note>
    </ligand>
</feature>
<accession>Q89ZI8</accession>
<proteinExistence type="evidence at protein level"/>
<reference key="1">
    <citation type="journal article" date="2003" name="Science">
        <title>A genomic view of the human-Bacteroides thetaiotaomicron symbiosis.</title>
        <authorList>
            <person name="Xu J."/>
            <person name="Bjursell M.K."/>
            <person name="Himrod J."/>
            <person name="Deng S."/>
            <person name="Carmichael L.K."/>
            <person name="Chiang H.C."/>
            <person name="Hooper L.V."/>
            <person name="Gordon J.I."/>
        </authorList>
    </citation>
    <scope>NUCLEOTIDE SEQUENCE [LARGE SCALE GENOMIC DNA]</scope>
    <source>
        <strain>ATCC 29148 / DSM 2079 / JCM 5827 / CCUG 10774 / NCTC 10582 / VPI-5482 / E50</strain>
    </source>
</reference>
<reference key="2">
    <citation type="journal article" date="2006" name="J. Biol. Chem.">
        <title>Novel polyphenol oxidase mined from a metagenome expression library of bovine rumen: biochemical properties, structural analysis, and phylogenetic relationships.</title>
        <authorList>
            <person name="Beloqui A."/>
            <person name="Pita M."/>
            <person name="Polaina J."/>
            <person name="Martinez-Arias A."/>
            <person name="Golyshina O.V."/>
            <person name="Zumarraga M."/>
            <person name="Yakimov M.M."/>
            <person name="Garcia-Arellano H."/>
            <person name="Alcalde M."/>
            <person name="Fernandez V.M."/>
            <person name="Elborough K."/>
            <person name="Andreu J.M."/>
            <person name="Ballesteros A."/>
            <person name="Plou F.J."/>
            <person name="Timmis K.N."/>
            <person name="Ferrer M."/>
            <person name="Golyshin P.N."/>
        </authorList>
    </citation>
    <scope>FUNCTION</scope>
    <scope>CATALYTIC ACTIVITY</scope>
    <scope>COFACTOR</scope>
    <scope>BIOPHYSICOCHEMICAL PROPERTIES</scope>
    <scope>SUBUNIT</scope>
    <source>
        <strain>ATCC 29148 / DSM 2079 / JCM 5827 / CCUG 10774 / NCTC 10582 / VPI-5482 / E50</strain>
    </source>
</reference>
<comment type="function">
    <text evidence="2">Purine nucleoside enzyme that catalyzes the phosphorolysis of adenosine and inosine nucleosides, yielding D-ribose 1-phosphate and the respective free bases, adenine and hypoxanthine. Also catalyzes the phosphorolysis of S-methyl-5'-thioadenosine into adenine and S-methyl-5-thio-alpha-D-ribose 1-phosphate. Also has adenosine deaminase activity.</text>
</comment>
<comment type="catalytic activity">
    <reaction evidence="2">
        <text>adenosine + phosphate = alpha-D-ribose 1-phosphate + adenine</text>
        <dbReference type="Rhea" id="RHEA:27642"/>
        <dbReference type="ChEBI" id="CHEBI:16335"/>
        <dbReference type="ChEBI" id="CHEBI:16708"/>
        <dbReference type="ChEBI" id="CHEBI:43474"/>
        <dbReference type="ChEBI" id="CHEBI:57720"/>
        <dbReference type="EC" id="2.4.2.1"/>
    </reaction>
    <physiologicalReaction direction="left-to-right" evidence="2">
        <dbReference type="Rhea" id="RHEA:27643"/>
    </physiologicalReaction>
</comment>
<comment type="catalytic activity">
    <reaction evidence="2">
        <text>S-methyl-5'-thioadenosine + phosphate = 5-(methylsulfanyl)-alpha-D-ribose 1-phosphate + adenine</text>
        <dbReference type="Rhea" id="RHEA:11852"/>
        <dbReference type="ChEBI" id="CHEBI:16708"/>
        <dbReference type="ChEBI" id="CHEBI:17509"/>
        <dbReference type="ChEBI" id="CHEBI:43474"/>
        <dbReference type="ChEBI" id="CHEBI:58533"/>
        <dbReference type="EC" id="2.4.2.28"/>
    </reaction>
    <physiologicalReaction direction="left-to-right" evidence="2">
        <dbReference type="Rhea" id="RHEA:11853"/>
    </physiologicalReaction>
</comment>
<comment type="catalytic activity">
    <reaction evidence="2">
        <text>inosine + phosphate = alpha-D-ribose 1-phosphate + hypoxanthine</text>
        <dbReference type="Rhea" id="RHEA:27646"/>
        <dbReference type="ChEBI" id="CHEBI:17368"/>
        <dbReference type="ChEBI" id="CHEBI:17596"/>
        <dbReference type="ChEBI" id="CHEBI:43474"/>
        <dbReference type="ChEBI" id="CHEBI:57720"/>
        <dbReference type="EC" id="2.4.2.1"/>
    </reaction>
    <physiologicalReaction direction="left-to-right" evidence="2">
        <dbReference type="Rhea" id="RHEA:27647"/>
    </physiologicalReaction>
</comment>
<comment type="catalytic activity">
    <reaction evidence="2">
        <text>adenosine + H2O + H(+) = inosine + NH4(+)</text>
        <dbReference type="Rhea" id="RHEA:24408"/>
        <dbReference type="ChEBI" id="CHEBI:15377"/>
        <dbReference type="ChEBI" id="CHEBI:15378"/>
        <dbReference type="ChEBI" id="CHEBI:16335"/>
        <dbReference type="ChEBI" id="CHEBI:17596"/>
        <dbReference type="ChEBI" id="CHEBI:28938"/>
        <dbReference type="EC" id="3.5.4.4"/>
    </reaction>
    <physiologicalReaction direction="left-to-right" evidence="2">
        <dbReference type="Rhea" id="RHEA:24409"/>
    </physiologicalReaction>
</comment>
<comment type="cofactor">
    <cofactor evidence="1">
        <name>Cu(2+)</name>
        <dbReference type="ChEBI" id="CHEBI:29036"/>
    </cofactor>
    <cofactor evidence="2">
        <name>Zn(2+)</name>
        <dbReference type="ChEBI" id="CHEBI:29105"/>
    </cofactor>
</comment>
<comment type="biophysicochemical properties">
    <kinetics>
        <KM evidence="3">10 uM for 2,2'-azino-bis(3-ethylbenzthiazoline-6-sulfonic acid) (at pH 4.5 and 40 degrees Celsius)</KM>
        <KM evidence="3">0.83 uM for syringaldazine (at pH 4.5 and 40 degrees Celsius)</KM>
        <text evidence="3">kcat is 13000 min(-1) with 2,2'-azino-bis(3-ethylbenzthiazoline-6-sulfonic acid) as substrate. kcat is 33300 min(-1) with syringaldazine as substrate (at pH 4.5 and 40 degrees Celsius).</text>
    </kinetics>
    <phDependence>
        <text evidence="3">Optimum pH is 4.5-6.0. Maintains 80% activity at pH 4.0-7.5.</text>
    </phDependence>
    <temperatureDependence>
        <text evidence="3">Optimum temperature is 52 degrees Celsius. Maintains more than 80% activity at 55 degrees Celsius.</text>
    </temperatureDependence>
</comment>
<comment type="subunit">
    <text evidence="3">Homodimer.</text>
</comment>
<comment type="similarity">
    <text evidence="4">Belongs to the purine nucleoside phosphorylase YfiH/LACC1 family.</text>
</comment>
<dbReference type="EC" id="2.4.2.1" evidence="2"/>
<dbReference type="EC" id="3.5.4.4" evidence="2"/>
<dbReference type="EC" id="2.4.2.28" evidence="2"/>
<dbReference type="EMBL" id="AE015928">
    <property type="protein sequence ID" value="AAO79494.1"/>
    <property type="molecule type" value="Genomic_DNA"/>
</dbReference>
<dbReference type="RefSeq" id="NP_813300.1">
    <property type="nucleotide sequence ID" value="NC_004663.1"/>
</dbReference>
<dbReference type="RefSeq" id="WP_011109232.1">
    <property type="nucleotide sequence ID" value="NC_004663.1"/>
</dbReference>
<dbReference type="SMR" id="Q89ZI8"/>
<dbReference type="FunCoup" id="Q89ZI8">
    <property type="interactions" value="375"/>
</dbReference>
<dbReference type="STRING" id="226186.BT_4389"/>
<dbReference type="PaxDb" id="226186-BT_4389"/>
<dbReference type="EnsemblBacteria" id="AAO79494">
    <property type="protein sequence ID" value="AAO79494"/>
    <property type="gene ID" value="BT_4389"/>
</dbReference>
<dbReference type="GeneID" id="60925565"/>
<dbReference type="KEGG" id="bth:BT_4389"/>
<dbReference type="PATRIC" id="fig|226186.12.peg.4467"/>
<dbReference type="eggNOG" id="COG1496">
    <property type="taxonomic scope" value="Bacteria"/>
</dbReference>
<dbReference type="HOGENOM" id="CLU_065784_0_0_10"/>
<dbReference type="InParanoid" id="Q89ZI8"/>
<dbReference type="OrthoDB" id="4279at2"/>
<dbReference type="SABIO-RK" id="Q89ZI8"/>
<dbReference type="Proteomes" id="UP000001414">
    <property type="component" value="Chromosome"/>
</dbReference>
<dbReference type="GO" id="GO:0004000">
    <property type="term" value="F:adenosine deaminase activity"/>
    <property type="evidence" value="ECO:0007669"/>
    <property type="project" value="RHEA"/>
</dbReference>
<dbReference type="GO" id="GO:0005507">
    <property type="term" value="F:copper ion binding"/>
    <property type="evidence" value="ECO:0000314"/>
    <property type="project" value="UniProtKB"/>
</dbReference>
<dbReference type="GO" id="GO:0016682">
    <property type="term" value="F:oxidoreductase activity, acting on diphenols and related substances as donors, oxygen as acceptor"/>
    <property type="evidence" value="ECO:0000314"/>
    <property type="project" value="UniProtKB"/>
</dbReference>
<dbReference type="GO" id="GO:0042803">
    <property type="term" value="F:protein homodimerization activity"/>
    <property type="evidence" value="ECO:0000314"/>
    <property type="project" value="UniProtKB"/>
</dbReference>
<dbReference type="GO" id="GO:0017061">
    <property type="term" value="F:S-methyl-5-thioadenosine phosphorylase activity"/>
    <property type="evidence" value="ECO:0007669"/>
    <property type="project" value="UniProtKB-EC"/>
</dbReference>
<dbReference type="CDD" id="cd16833">
    <property type="entry name" value="YfiH"/>
    <property type="match status" value="1"/>
</dbReference>
<dbReference type="FunFam" id="3.60.140.10:FF:000011">
    <property type="entry name" value="Polyphenol oxidase"/>
    <property type="match status" value="1"/>
</dbReference>
<dbReference type="Gene3D" id="3.60.140.10">
    <property type="entry name" value="CNF1/YfiH-like putative cysteine hydrolases"/>
    <property type="match status" value="1"/>
</dbReference>
<dbReference type="InterPro" id="IPR003730">
    <property type="entry name" value="Cu_polyphenol_OxRdtase"/>
</dbReference>
<dbReference type="InterPro" id="IPR038371">
    <property type="entry name" value="Cu_polyphenol_OxRdtase_sf"/>
</dbReference>
<dbReference type="InterPro" id="IPR011324">
    <property type="entry name" value="Cytotoxic_necrot_fac-like_cat"/>
</dbReference>
<dbReference type="NCBIfam" id="TIGR00726">
    <property type="entry name" value="peptidoglycan editing factor PgeF"/>
    <property type="match status" value="1"/>
</dbReference>
<dbReference type="PANTHER" id="PTHR30616:SF2">
    <property type="entry name" value="PURINE NUCLEOSIDE PHOSPHORYLASE LACC1"/>
    <property type="match status" value="1"/>
</dbReference>
<dbReference type="PANTHER" id="PTHR30616">
    <property type="entry name" value="UNCHARACTERIZED PROTEIN YFIH"/>
    <property type="match status" value="1"/>
</dbReference>
<dbReference type="Pfam" id="PF02578">
    <property type="entry name" value="Cu-oxidase_4"/>
    <property type="match status" value="1"/>
</dbReference>
<dbReference type="SUPFAM" id="SSF64438">
    <property type="entry name" value="CNF1/YfiH-like putative cysteine hydrolases"/>
    <property type="match status" value="1"/>
</dbReference>
<organism>
    <name type="scientific">Bacteroides thetaiotaomicron (strain ATCC 29148 / DSM 2079 / JCM 5827 / CCUG 10774 / NCTC 10582 / VPI-5482 / E50)</name>
    <dbReference type="NCBI Taxonomy" id="226186"/>
    <lineage>
        <taxon>Bacteria</taxon>
        <taxon>Pseudomonadati</taxon>
        <taxon>Bacteroidota</taxon>
        <taxon>Bacteroidia</taxon>
        <taxon>Bacteroidales</taxon>
        <taxon>Bacteroidaceae</taxon>
        <taxon>Bacteroides</taxon>
    </lineage>
</organism>
<evidence type="ECO:0000250" key="1">
    <source>
        <dbReference type="UniProtKB" id="P33644"/>
    </source>
</evidence>
<evidence type="ECO:0000250" key="2">
    <source>
        <dbReference type="UniProtKB" id="P84138"/>
    </source>
</evidence>
<evidence type="ECO:0000269" key="3">
    <source>
    </source>
</evidence>
<evidence type="ECO:0000305" key="4"/>
<evidence type="ECO:0000312" key="5">
    <source>
        <dbReference type="EMBL" id="AAO79494.1"/>
    </source>
</evidence>
<sequence>MISITKDKRMLGYESLSSYSNISHFVTTRQGGCSEGNYASFNCTPYSGDEAEKVRRNQTLLMEGMSQIPEELVIPVQTHETNYLLIGDAYLSASSQQRQEMLHGVDALITREPGYCLCISTADCVPVLVYDKKHGAIAAIHAGWRGTVAYIVRDTLLRMEKEFGTSGEDVVACIGPSISLASFEVGEEVYEAFQKNGFDMPRISIRKEETGKHHIDLWEANRMQILAFGVPSGQVELARICTYIHHDEFFSARRLGIKSGRILSGIMIHK</sequence>